<organism>
    <name type="scientific">Mus musculus</name>
    <name type="common">Mouse</name>
    <dbReference type="NCBI Taxonomy" id="10090"/>
    <lineage>
        <taxon>Eukaryota</taxon>
        <taxon>Metazoa</taxon>
        <taxon>Chordata</taxon>
        <taxon>Craniata</taxon>
        <taxon>Vertebrata</taxon>
        <taxon>Euteleostomi</taxon>
        <taxon>Mammalia</taxon>
        <taxon>Eutheria</taxon>
        <taxon>Euarchontoglires</taxon>
        <taxon>Glires</taxon>
        <taxon>Rodentia</taxon>
        <taxon>Myomorpha</taxon>
        <taxon>Muroidea</taxon>
        <taxon>Muridae</taxon>
        <taxon>Murinae</taxon>
        <taxon>Mus</taxon>
        <taxon>Mus</taxon>
    </lineage>
</organism>
<feature type="chain" id="PRO_0000227783" description="Free fatty acid receptor 3">
    <location>
        <begin position="1"/>
        <end position="319"/>
    </location>
</feature>
<feature type="topological domain" description="Extracellular" evidence="1">
    <location>
        <begin position="1"/>
        <end position="15"/>
    </location>
</feature>
<feature type="transmembrane region" description="Helical; Name=1" evidence="1">
    <location>
        <begin position="16"/>
        <end position="36"/>
    </location>
</feature>
<feature type="topological domain" description="Cytoplasmic" evidence="1">
    <location>
        <begin position="37"/>
        <end position="43"/>
    </location>
</feature>
<feature type="transmembrane region" description="Helical; Name=2" evidence="1">
    <location>
        <begin position="44"/>
        <end position="64"/>
    </location>
</feature>
<feature type="topological domain" description="Extracellular" evidence="1">
    <location>
        <begin position="65"/>
        <end position="98"/>
    </location>
</feature>
<feature type="transmembrane region" description="Helical; Name=3" evidence="1">
    <location>
        <begin position="99"/>
        <end position="119"/>
    </location>
</feature>
<feature type="topological domain" description="Cytoplasmic" evidence="1">
    <location>
        <begin position="120"/>
        <end position="127"/>
    </location>
</feature>
<feature type="transmembrane region" description="Helical; Name=4" evidence="1">
    <location>
        <begin position="128"/>
        <end position="148"/>
    </location>
</feature>
<feature type="topological domain" description="Extracellular" evidence="1">
    <location>
        <begin position="149"/>
        <end position="183"/>
    </location>
</feature>
<feature type="transmembrane region" description="Helical; Name=5" evidence="1">
    <location>
        <begin position="184"/>
        <end position="206"/>
    </location>
</feature>
<feature type="topological domain" description="Cytoplasmic" evidence="1">
    <location>
        <begin position="207"/>
        <end position="218"/>
    </location>
</feature>
<feature type="transmembrane region" description="Helical; Name=6" evidence="1">
    <location>
        <begin position="219"/>
        <end position="239"/>
    </location>
</feature>
<feature type="topological domain" description="Extracellular" evidence="1">
    <location>
        <begin position="240"/>
        <end position="254"/>
    </location>
</feature>
<feature type="transmembrane region" description="Helical; Name=7" evidence="1">
    <location>
        <begin position="255"/>
        <end position="275"/>
    </location>
</feature>
<feature type="topological domain" description="Cytoplasmic" evidence="1">
    <location>
        <begin position="276"/>
        <end position="319"/>
    </location>
</feature>
<feature type="glycosylation site" description="N-linked (GlcNAc...) asparagine" evidence="1">
    <location>
        <position position="154"/>
    </location>
</feature>
<feature type="glycosylation site" description="N-linked (GlcNAc...) asparagine" evidence="1">
    <location>
        <position position="162"/>
    </location>
</feature>
<feature type="disulfide bond" evidence="2">
    <location>
        <begin position="84"/>
        <end position="165"/>
    </location>
</feature>
<feature type="mutagenesis site" description="Loss of SCFA-independent constitutive G protein-coupled receptor activity." evidence="9">
    <original>N</original>
    <variation>D</variation>
    <location>
        <position position="154"/>
    </location>
</feature>
<evidence type="ECO:0000255" key="1"/>
<evidence type="ECO:0000255" key="2">
    <source>
        <dbReference type="PROSITE-ProRule" id="PRU00521"/>
    </source>
</evidence>
<evidence type="ECO:0000269" key="3">
    <source>
    </source>
</evidence>
<evidence type="ECO:0000269" key="4">
    <source>
    </source>
</evidence>
<evidence type="ECO:0000269" key="5">
    <source>
    </source>
</evidence>
<evidence type="ECO:0000269" key="6">
    <source>
    </source>
</evidence>
<evidence type="ECO:0000269" key="7">
    <source>
    </source>
</evidence>
<evidence type="ECO:0000269" key="8">
    <source>
    </source>
</evidence>
<evidence type="ECO:0000269" key="9">
    <source>
    </source>
</evidence>
<evidence type="ECO:0000269" key="10">
    <source>
    </source>
</evidence>
<evidence type="ECO:0000269" key="11">
    <source>
    </source>
</evidence>
<evidence type="ECO:0000269" key="12">
    <source>
    </source>
</evidence>
<evidence type="ECO:0000269" key="13">
    <source>
    </source>
</evidence>
<sequence length="319" mass="36501">MGTSFFLGNYWLFFSVYLLVFLVGLPLNVMALVVFVGKLRRRPVAVDLLLLNLTISDLLLLLFLPFRMVEAACGMRWLLPFIFCPLSGFLFFTTIYLTSLFLTAVSIERFLSVAYPLWYKTRPRLAQAGLVSVVCWFLASAHCSVVYITEYWGNATYSQGTNGTCYLEFREDQLAILLPVRLEMAVVLFMVPLCITSYCYSRLVWILSRGASRRRRKRIMGLLAATLLIFFVCFGPYNMSHVVGYVSRESPSWRSYVLLLSTLNSCIDPLVFYFSSSKFQADFHQLLGRLLRTCVPWTQQVSLELKVKNGEEPSKECPS</sequence>
<accession>Q3UFD7</accession>
<reference key="1">
    <citation type="journal article" date="2005" name="Science">
        <title>The transcriptional landscape of the mammalian genome.</title>
        <authorList>
            <person name="Carninci P."/>
            <person name="Kasukawa T."/>
            <person name="Katayama S."/>
            <person name="Gough J."/>
            <person name="Frith M.C."/>
            <person name="Maeda N."/>
            <person name="Oyama R."/>
            <person name="Ravasi T."/>
            <person name="Lenhard B."/>
            <person name="Wells C."/>
            <person name="Kodzius R."/>
            <person name="Shimokawa K."/>
            <person name="Bajic V.B."/>
            <person name="Brenner S.E."/>
            <person name="Batalov S."/>
            <person name="Forrest A.R."/>
            <person name="Zavolan M."/>
            <person name="Davis M.J."/>
            <person name="Wilming L.G."/>
            <person name="Aidinis V."/>
            <person name="Allen J.E."/>
            <person name="Ambesi-Impiombato A."/>
            <person name="Apweiler R."/>
            <person name="Aturaliya R.N."/>
            <person name="Bailey T.L."/>
            <person name="Bansal M."/>
            <person name="Baxter L."/>
            <person name="Beisel K.W."/>
            <person name="Bersano T."/>
            <person name="Bono H."/>
            <person name="Chalk A.M."/>
            <person name="Chiu K.P."/>
            <person name="Choudhary V."/>
            <person name="Christoffels A."/>
            <person name="Clutterbuck D.R."/>
            <person name="Crowe M.L."/>
            <person name="Dalla E."/>
            <person name="Dalrymple B.P."/>
            <person name="de Bono B."/>
            <person name="Della Gatta G."/>
            <person name="di Bernardo D."/>
            <person name="Down T."/>
            <person name="Engstrom P."/>
            <person name="Fagiolini M."/>
            <person name="Faulkner G."/>
            <person name="Fletcher C.F."/>
            <person name="Fukushima T."/>
            <person name="Furuno M."/>
            <person name="Futaki S."/>
            <person name="Gariboldi M."/>
            <person name="Georgii-Hemming P."/>
            <person name="Gingeras T.R."/>
            <person name="Gojobori T."/>
            <person name="Green R.E."/>
            <person name="Gustincich S."/>
            <person name="Harbers M."/>
            <person name="Hayashi Y."/>
            <person name="Hensch T.K."/>
            <person name="Hirokawa N."/>
            <person name="Hill D."/>
            <person name="Huminiecki L."/>
            <person name="Iacono M."/>
            <person name="Ikeo K."/>
            <person name="Iwama A."/>
            <person name="Ishikawa T."/>
            <person name="Jakt M."/>
            <person name="Kanapin A."/>
            <person name="Katoh M."/>
            <person name="Kawasawa Y."/>
            <person name="Kelso J."/>
            <person name="Kitamura H."/>
            <person name="Kitano H."/>
            <person name="Kollias G."/>
            <person name="Krishnan S.P."/>
            <person name="Kruger A."/>
            <person name="Kummerfeld S.K."/>
            <person name="Kurochkin I.V."/>
            <person name="Lareau L.F."/>
            <person name="Lazarevic D."/>
            <person name="Lipovich L."/>
            <person name="Liu J."/>
            <person name="Liuni S."/>
            <person name="McWilliam S."/>
            <person name="Madan Babu M."/>
            <person name="Madera M."/>
            <person name="Marchionni L."/>
            <person name="Matsuda H."/>
            <person name="Matsuzawa S."/>
            <person name="Miki H."/>
            <person name="Mignone F."/>
            <person name="Miyake S."/>
            <person name="Morris K."/>
            <person name="Mottagui-Tabar S."/>
            <person name="Mulder N."/>
            <person name="Nakano N."/>
            <person name="Nakauchi H."/>
            <person name="Ng P."/>
            <person name="Nilsson R."/>
            <person name="Nishiguchi S."/>
            <person name="Nishikawa S."/>
            <person name="Nori F."/>
            <person name="Ohara O."/>
            <person name="Okazaki Y."/>
            <person name="Orlando V."/>
            <person name="Pang K.C."/>
            <person name="Pavan W.J."/>
            <person name="Pavesi G."/>
            <person name="Pesole G."/>
            <person name="Petrovsky N."/>
            <person name="Piazza S."/>
            <person name="Reed J."/>
            <person name="Reid J.F."/>
            <person name="Ring B.Z."/>
            <person name="Ringwald M."/>
            <person name="Rost B."/>
            <person name="Ruan Y."/>
            <person name="Salzberg S.L."/>
            <person name="Sandelin A."/>
            <person name="Schneider C."/>
            <person name="Schoenbach C."/>
            <person name="Sekiguchi K."/>
            <person name="Semple C.A."/>
            <person name="Seno S."/>
            <person name="Sessa L."/>
            <person name="Sheng Y."/>
            <person name="Shibata Y."/>
            <person name="Shimada H."/>
            <person name="Shimada K."/>
            <person name="Silva D."/>
            <person name="Sinclair B."/>
            <person name="Sperling S."/>
            <person name="Stupka E."/>
            <person name="Sugiura K."/>
            <person name="Sultana R."/>
            <person name="Takenaka Y."/>
            <person name="Taki K."/>
            <person name="Tammoja K."/>
            <person name="Tan S.L."/>
            <person name="Tang S."/>
            <person name="Taylor M.S."/>
            <person name="Tegner J."/>
            <person name="Teichmann S.A."/>
            <person name="Ueda H.R."/>
            <person name="van Nimwegen E."/>
            <person name="Verardo R."/>
            <person name="Wei C.L."/>
            <person name="Yagi K."/>
            <person name="Yamanishi H."/>
            <person name="Zabarovsky E."/>
            <person name="Zhu S."/>
            <person name="Zimmer A."/>
            <person name="Hide W."/>
            <person name="Bult C."/>
            <person name="Grimmond S.M."/>
            <person name="Teasdale R.D."/>
            <person name="Liu E.T."/>
            <person name="Brusic V."/>
            <person name="Quackenbush J."/>
            <person name="Wahlestedt C."/>
            <person name="Mattick J.S."/>
            <person name="Hume D.A."/>
            <person name="Kai C."/>
            <person name="Sasaki D."/>
            <person name="Tomaru Y."/>
            <person name="Fukuda S."/>
            <person name="Kanamori-Katayama M."/>
            <person name="Suzuki M."/>
            <person name="Aoki J."/>
            <person name="Arakawa T."/>
            <person name="Iida J."/>
            <person name="Imamura K."/>
            <person name="Itoh M."/>
            <person name="Kato T."/>
            <person name="Kawaji H."/>
            <person name="Kawagashira N."/>
            <person name="Kawashima T."/>
            <person name="Kojima M."/>
            <person name="Kondo S."/>
            <person name="Konno H."/>
            <person name="Nakano K."/>
            <person name="Ninomiya N."/>
            <person name="Nishio T."/>
            <person name="Okada M."/>
            <person name="Plessy C."/>
            <person name="Shibata K."/>
            <person name="Shiraki T."/>
            <person name="Suzuki S."/>
            <person name="Tagami M."/>
            <person name="Waki K."/>
            <person name="Watahiki A."/>
            <person name="Okamura-Oho Y."/>
            <person name="Suzuki H."/>
            <person name="Kawai J."/>
            <person name="Hayashizaki Y."/>
        </authorList>
    </citation>
    <scope>NUCLEOTIDE SEQUENCE [LARGE SCALE MRNA]</scope>
    <source>
        <strain>C57BL/6J</strain>
        <tissue>Sympathetic ganglion</tissue>
    </source>
</reference>
<reference key="2">
    <citation type="journal article" date="2004" name="Proc. Natl. Acad. Sci. U.S.A.">
        <title>Short-chain fatty acids stimulate leptin production in adipocytes through the G protein-coupled receptor GPR41.</title>
        <authorList>
            <person name="Xiong Y."/>
            <person name="Miyamoto N."/>
            <person name="Shibata K."/>
            <person name="Valasek M.A."/>
            <person name="Motoike T."/>
            <person name="Kedzierski R.M."/>
            <person name="Yanagisawa M."/>
        </authorList>
    </citation>
    <scope>FUNCTION</scope>
    <scope>TISSUE SPECIFICITY</scope>
</reference>
<reference key="3">
    <citation type="journal article" date="2008" name="Proc. Natl. Acad. Sci. U.S.A.">
        <title>Effects of the gut microbiota on host adiposity are modulated by the short-chain fatty-acid binding G protein-coupled receptor, Gpr41.</title>
        <authorList>
            <person name="Samuel B.S."/>
            <person name="Shaito A."/>
            <person name="Motoike T."/>
            <person name="Rey F.E."/>
            <person name="Backhed F."/>
            <person name="Manchester J.K."/>
            <person name="Hammer R.E."/>
            <person name="Williams S.C."/>
            <person name="Crowley J."/>
            <person name="Yanagisawa M."/>
            <person name="Gordon J.I."/>
        </authorList>
    </citation>
    <scope>FUNCTION</scope>
    <scope>DISRUPTION PHENOTYPE</scope>
    <scope>TISSUE SPECIFICITY</scope>
</reference>
<reference key="4">
    <citation type="journal article" date="2010" name="FEBS Lett.">
        <title>Roles of GPR41 and GPR43 in leptin secretory responses of murine adipocytes to short chain fatty acids.</title>
        <authorList>
            <person name="Zaibi M.S."/>
            <person name="Stocker C.J."/>
            <person name="O'Dowd J."/>
            <person name="Davies A."/>
            <person name="Bellahcene M."/>
            <person name="Cawthorne M.A."/>
            <person name="Brown A.J."/>
            <person name="Smith D.M."/>
            <person name="Arch J.R."/>
        </authorList>
    </citation>
    <scope>FUNCTION</scope>
</reference>
<reference key="5">
    <citation type="journal article" date="2011" name="Proc. Natl. Acad. Sci. U.S.A.">
        <title>Short-chain fatty acids and ketones directly regulate sympathetic nervous system via G protein-coupled receptor 41 (GPR41).</title>
        <authorList>
            <person name="Kimura I."/>
            <person name="Inoue D."/>
            <person name="Maeda T."/>
            <person name="Hara T."/>
            <person name="Ichimura A."/>
            <person name="Miyauchi S."/>
            <person name="Kobayashi M."/>
            <person name="Hirasawa A."/>
            <person name="Tsujimoto G."/>
        </authorList>
    </citation>
    <scope>FUNCTION</scope>
    <scope>DISRUPTION PHENOTYPE</scope>
    <scope>TISSUE SPECIFICITY</scope>
    <scope>DEVELOPMENTAL STAGE</scope>
</reference>
<reference key="6">
    <citation type="journal article" date="2012" name="Diabetes">
        <title>Short-chain fatty acids stimulate glucagon-like peptide-1 secretion via the G-protein-coupled receptor FFAR2.</title>
        <authorList>
            <person name="Tolhurst G."/>
            <person name="Heffron H."/>
            <person name="Lam Y.S."/>
            <person name="Parker H.E."/>
            <person name="Habib A.M."/>
            <person name="Diakogiannaki E."/>
            <person name="Cameron J."/>
            <person name="Grosse J."/>
            <person name="Reimann F."/>
            <person name="Gribble F.M."/>
        </authorList>
    </citation>
    <scope>FUNCTION</scope>
    <scope>DISRUPTION PHENOTYPE</scope>
    <scope>TISSUE SPECIFICITY</scope>
</reference>
<reference key="7">
    <citation type="journal article" date="2012" name="FEBS Lett.">
        <title>Short-chain fatty acid receptor GPR41-mediated activation of sympathetic neurons involves synapsin 2b phosphorylation.</title>
        <authorList>
            <person name="Inoue D."/>
            <person name="Kimura I."/>
            <person name="Wakabayashi M."/>
            <person name="Tsumoto H."/>
            <person name="Ozawa K."/>
            <person name="Hara T."/>
            <person name="Takei Y."/>
            <person name="Hirasawa A."/>
            <person name="Ishihama Y."/>
            <person name="Tsujimoto G."/>
        </authorList>
    </citation>
    <scope>FUNCTION</scope>
</reference>
<reference key="8">
    <citation type="journal article" date="2012" name="J. Biol. Chem.">
        <title>Extracellular ionic locks determine variation in constitutive activity and ligand potency between species orthologs of the free fatty acid receptors FFA2 and FFA3.</title>
        <authorList>
            <person name="Hudson B.D."/>
            <person name="Tikhonova I.G."/>
            <person name="Pandey S.K."/>
            <person name="Ulven T."/>
            <person name="Milligan G."/>
        </authorList>
    </citation>
    <scope>FUNCTION</scope>
    <scope>MUTAGENESIS OF ASN-154</scope>
</reference>
<reference key="9">
    <citation type="journal article" date="2013" name="Br. J. Nutr.">
        <title>Male mice that lack the G-protein-coupled receptor GPR41 have low energy expenditure and increased body fat content.</title>
        <authorList>
            <person name="Bellahcene M."/>
            <person name="O'Dowd J.F."/>
            <person name="Wargent E.T."/>
            <person name="Zaibi M.S."/>
            <person name="Hislop D.C."/>
            <person name="Ngala R.A."/>
            <person name="Smith D.M."/>
            <person name="Cawthorne M.A."/>
            <person name="Stocker C.J."/>
            <person name="Arch J.R."/>
        </authorList>
    </citation>
    <scope>DISRUPTION PHENOTYPE</scope>
</reference>
<reference key="10">
    <citation type="journal article" date="2013" name="Gastroenterology">
        <title>Short-chain fatty acids activate GPR41 and GPR43 on intestinal epithelial cells to promote inflammatory responses in mice.</title>
        <authorList>
            <person name="Kim M.H."/>
            <person name="Kang S.G."/>
            <person name="Park J.H."/>
            <person name="Yanagisawa M."/>
            <person name="Kim C.H."/>
        </authorList>
    </citation>
    <scope>FUNCTION</scope>
    <scope>DISRUPTION PHENOTYPE</scope>
</reference>
<reference key="11">
    <citation type="journal article" date="2013" name="Proc. Natl. Acad. Sci. U.S.A.">
        <title>Olfactory receptor responding to gut microbiota-derived signals plays a role in renin secretion and blood pressure regulation.</title>
        <authorList>
            <person name="Pluznick J.L."/>
            <person name="Protzko R.J."/>
            <person name="Gevorgyan H."/>
            <person name="Peterlin Z."/>
            <person name="Sipos A."/>
            <person name="Han J."/>
            <person name="Brunet I."/>
            <person name="Wan L.X."/>
            <person name="Rey F."/>
            <person name="Wang T."/>
            <person name="Firestein S.J."/>
            <person name="Yanagisawa M."/>
            <person name="Gordon J.I."/>
            <person name="Eichmann A."/>
            <person name="Peti-Peterdi J."/>
            <person name="Caplan M.J."/>
        </authorList>
    </citation>
    <scope>FUNCTION</scope>
</reference>
<reference key="12">
    <citation type="journal article" date="2014" name="PLoS ONE">
        <title>The effects of propionate and valerate on insulin responsiveness for glucose uptake in 3T3-L1 adipocytes and C2C12 myotubes via G protein-coupled receptor 41.</title>
        <authorList>
            <person name="Han J.H."/>
            <person name="Kim I.S."/>
            <person name="Jung S.H."/>
            <person name="Lee S.G."/>
            <person name="Son H.Y."/>
            <person name="Myung C.S."/>
        </authorList>
    </citation>
    <scope>FUNCTION</scope>
    <scope>TISSUE SPECIFICITY</scope>
</reference>
<protein>
    <recommendedName>
        <fullName>Free fatty acid receptor 3</fullName>
    </recommendedName>
    <alternativeName>
        <fullName>G-protein coupled receptor 41</fullName>
    </alternativeName>
</protein>
<gene>
    <name type="primary">Ffar3</name>
    <name type="synonym">Gm478</name>
    <name type="synonym">Gpr41</name>
</gene>
<name>FFAR3_MOUSE</name>
<proteinExistence type="evidence at protein level"/>
<comment type="function">
    <text evidence="3 4 5 6 7 8 9 11 12 13">G protein-coupled receptor that is activated by a major product of dietary fiber digestion, the short chain fatty acids (SCFAs), and that plays a role in the regulation of whole-body energy homeostasis and in intestinal immunity. In omnivorous mammals, the short chain fatty acids acetate, propionate and butyrate are produced primarily by the gut microbiome that metabolizes dietary fibers. SCFAs serve as a source of energy but also act as signaling molecules. That G protein-coupled receptor is probably coupled to the pertussis toxin-sensitive, G(i/o)-alpha family of G proteins. Its activation results in the formation of inositol 1,4,5-trisphosphate, the mobilization of intracellular calcium, the phosphorylation of the MAPK3/ERK1 and MAPK1/ERK2 kinases and the inhibition of intracellular cAMP accumulation. Activated by SCFAs and by beta-hydroxybutyrate, a ketone body produced by the liver upon starvation, it inhibits N-type calcium channels and modulates the activity of sympathetic neurons through a signaling cascade involving the beta and gamma subunits of its coupled G protein, phospholipase C and MAP kinases. Thereby, it may regulate energy expenditure through the control of the sympathetic nervous system that controls for instance heart rate (PubMed:21518883, PubMed:22673524). Upon activation by SCFAs accumulating in the intestine, it may also signal to the brain via neural circuits which in turn would regulate intestinal gluconeogenesis. May also control the production of hormones involved in whole-body energy homeostasis. May for instance, regulate blood pressure through renin secretion (PubMed:23401498). May also regulate secretion of the PYY peptide by enteroendocrine cells and control gut motility, intestinal transit rate, and the harvesting of energy from SCFAs produced by gut microbiota (PubMed:18931303). May also indirectly regulate the production of LEP/Leptin, a hormone acting on the CNS to inhibit food intake, in response to the presence of short-chain fatty acids in the intestine (PubMed:14722361, PubMed:20399779). Finally, may also play a role in glucose homeostasis (PubMed:22190648, PubMed:24748202). Besides its role in energy homeostasis, may play a role in intestinal immunity. May mediate the activation of the inflammatory and immune response by SCFAs in the gut, regulating the rapid production of chemokines and cytokines by intestinal epithelial cells (PubMed:23665276). Exhibits an SCFA-independent constitutive G protein-coupled receptor activity (PubMed:23066016).</text>
</comment>
<comment type="subcellular location">
    <subcellularLocation>
        <location>Cell membrane</location>
        <topology>Multi-pass membrane protein</topology>
    </subcellularLocation>
</comment>
<comment type="tissue specificity">
    <text evidence="3 4 6 7 13">Expressed in white adipose tissue and skeletal muscle (at protein level). Abundantly expressed in sympathetic ganglia such as the superior cervical ganglion. Also expressed by intestinal endocrine cells.</text>
</comment>
<comment type="developmental stage">
    <text evidence="6">Expressed in sympathetic ganglia and trunks at 13.5 dpc, 15.5 dpc and P1. Up-regulated during myocyte and adipocyte differentiation (at protein level).</text>
</comment>
<comment type="disruption phenotype">
    <text evidence="4 6 7 10 12">Knockout mice display a retarded growth of sympathetic innervation and the superior cervical ganglion is significantly smaller. A heart rate decrease is also observed together with altered secretion of cardiac noradrenaline that might be due to reduced sympathetic nerve activity. Contrary to wild-type mice, oxygen consumption is not modified by feeding or starvation (PubMed:21518883). They also display impaired SCFA-triggered glucagon-like peptide 1/GLP-1 secretion and impaired glucose tolerance (PubMed:22190648). Finally, knockout mice display altered protective intestinal inflammatory and immune responses. Otherwise, they display normal growth and no major morphological abnormalities. Body weight, heart weight to body weight ratio, and metabolic parameters are comparable. However, there might be a gender bias, the effect on energy expenditure and body fat content being male specific (PubMed:23110765).</text>
</comment>
<comment type="similarity">
    <text evidence="2">Belongs to the G-protein coupled receptor 1 family.</text>
</comment>
<keyword id="KW-1003">Cell membrane</keyword>
<keyword id="KW-1015">Disulfide bond</keyword>
<keyword id="KW-0297">G-protein coupled receptor</keyword>
<keyword id="KW-0325">Glycoprotein</keyword>
<keyword id="KW-0391">Immunity</keyword>
<keyword id="KW-0395">Inflammatory response</keyword>
<keyword id="KW-0446">Lipid-binding</keyword>
<keyword id="KW-0472">Membrane</keyword>
<keyword id="KW-0675">Receptor</keyword>
<keyword id="KW-1185">Reference proteome</keyword>
<keyword id="KW-0807">Transducer</keyword>
<keyword id="KW-0812">Transmembrane</keyword>
<keyword id="KW-1133">Transmembrane helix</keyword>
<dbReference type="EMBL" id="AK148616">
    <property type="protein sequence ID" value="BAE28624.1"/>
    <property type="molecule type" value="mRNA"/>
</dbReference>
<dbReference type="CCDS" id="CCDS21112.1"/>
<dbReference type="RefSeq" id="NP_001028488.1">
    <property type="nucleotide sequence ID" value="NM_001033316.2"/>
</dbReference>
<dbReference type="SMR" id="Q3UFD7"/>
<dbReference type="FunCoup" id="Q3UFD7">
    <property type="interactions" value="1135"/>
</dbReference>
<dbReference type="STRING" id="10090.ENSMUSP00000092163"/>
<dbReference type="BindingDB" id="Q3UFD7"/>
<dbReference type="ChEMBL" id="CHEMBL3309101"/>
<dbReference type="GlyCosmos" id="Q3UFD7">
    <property type="glycosylation" value="2 sites, No reported glycans"/>
</dbReference>
<dbReference type="GlyGen" id="Q3UFD7">
    <property type="glycosylation" value="2 sites"/>
</dbReference>
<dbReference type="PaxDb" id="10090-ENSMUSP00000092163"/>
<dbReference type="Ensembl" id="ENSMUST00000094583.2">
    <property type="protein sequence ID" value="ENSMUSP00000092163.2"/>
    <property type="gene ID" value="ENSMUSG00000019429.8"/>
</dbReference>
<dbReference type="Ensembl" id="ENSMUST00000185748.2">
    <property type="protein sequence ID" value="ENSMUSP00000140252.2"/>
    <property type="gene ID" value="ENSMUSG00000019429.8"/>
</dbReference>
<dbReference type="GeneID" id="233080"/>
<dbReference type="KEGG" id="mmu:233080"/>
<dbReference type="UCSC" id="uc009ggp.1">
    <property type="organism name" value="mouse"/>
</dbReference>
<dbReference type="AGR" id="MGI:2685324"/>
<dbReference type="CTD" id="2865"/>
<dbReference type="MGI" id="MGI:2685324">
    <property type="gene designation" value="Ffar3"/>
</dbReference>
<dbReference type="VEuPathDB" id="HostDB:ENSMUSG00000019429"/>
<dbReference type="eggNOG" id="ENOG502QQGM">
    <property type="taxonomic scope" value="Eukaryota"/>
</dbReference>
<dbReference type="GeneTree" id="ENSGT00990000203527"/>
<dbReference type="HOGENOM" id="CLU_009579_8_4_1"/>
<dbReference type="InParanoid" id="Q3UFD7"/>
<dbReference type="OMA" id="HWLYFSV"/>
<dbReference type="OrthoDB" id="5961208at2759"/>
<dbReference type="PhylomeDB" id="Q3UFD7"/>
<dbReference type="TreeFam" id="TF350010"/>
<dbReference type="Reactome" id="R-MMU-416476">
    <property type="pathway name" value="G alpha (q) signalling events"/>
</dbReference>
<dbReference type="Reactome" id="R-MMU-444209">
    <property type="pathway name" value="Free fatty acid receptors"/>
</dbReference>
<dbReference type="BioGRID-ORCS" id="233080">
    <property type="hits" value="0 hits in 76 CRISPR screens"/>
</dbReference>
<dbReference type="PRO" id="PR:Q3UFD7"/>
<dbReference type="Proteomes" id="UP000000589">
    <property type="component" value="Chromosome 7"/>
</dbReference>
<dbReference type="RNAct" id="Q3UFD7">
    <property type="molecule type" value="protein"/>
</dbReference>
<dbReference type="Bgee" id="ENSMUSG00000019429">
    <property type="expression patterns" value="Expressed in islet of Langerhans and 18 other cell types or tissues"/>
</dbReference>
<dbReference type="ExpressionAtlas" id="Q3UFD7">
    <property type="expression patterns" value="baseline and differential"/>
</dbReference>
<dbReference type="GO" id="GO:0016020">
    <property type="term" value="C:membrane"/>
    <property type="evidence" value="ECO:0000314"/>
    <property type="project" value="MGI"/>
</dbReference>
<dbReference type="GO" id="GO:0005886">
    <property type="term" value="C:plasma membrane"/>
    <property type="evidence" value="ECO:0000250"/>
    <property type="project" value="UniProtKB"/>
</dbReference>
<dbReference type="GO" id="GO:0004930">
    <property type="term" value="F:G protein-coupled receptor activity"/>
    <property type="evidence" value="ECO:0000314"/>
    <property type="project" value="MGI"/>
</dbReference>
<dbReference type="GO" id="GO:0008289">
    <property type="term" value="F:lipid binding"/>
    <property type="evidence" value="ECO:0007669"/>
    <property type="project" value="UniProtKB-KW"/>
</dbReference>
<dbReference type="GO" id="GO:0007193">
    <property type="term" value="P:adenylate cyclase-inhibiting G protein-coupled receptor signaling pathway"/>
    <property type="evidence" value="ECO:0000315"/>
    <property type="project" value="MGI"/>
</dbReference>
<dbReference type="GO" id="GO:0071398">
    <property type="term" value="P:cellular response to fatty acid"/>
    <property type="evidence" value="ECO:0000315"/>
    <property type="project" value="UniProtKB"/>
</dbReference>
<dbReference type="GO" id="GO:0007186">
    <property type="term" value="P:G protein-coupled receptor signaling pathway"/>
    <property type="evidence" value="ECO:0000314"/>
    <property type="project" value="MGI"/>
</dbReference>
<dbReference type="GO" id="GO:0042593">
    <property type="term" value="P:glucose homeostasis"/>
    <property type="evidence" value="ECO:0000315"/>
    <property type="project" value="UniProtKB"/>
</dbReference>
<dbReference type="GO" id="GO:0006954">
    <property type="term" value="P:inflammatory response"/>
    <property type="evidence" value="ECO:0007669"/>
    <property type="project" value="UniProtKB-KW"/>
</dbReference>
<dbReference type="GO" id="GO:0002385">
    <property type="term" value="P:mucosal immune response"/>
    <property type="evidence" value="ECO:0000315"/>
    <property type="project" value="UniProtKB"/>
</dbReference>
<dbReference type="GO" id="GO:0045776">
    <property type="term" value="P:negative regulation of blood pressure"/>
    <property type="evidence" value="ECO:0000315"/>
    <property type="project" value="UniProtKB"/>
</dbReference>
<dbReference type="GO" id="GO:0046676">
    <property type="term" value="P:negative regulation of insulin secretion"/>
    <property type="evidence" value="ECO:0000315"/>
    <property type="project" value="MGI"/>
</dbReference>
<dbReference type="GO" id="GO:0019228">
    <property type="term" value="P:neuronal action potential"/>
    <property type="evidence" value="ECO:0000315"/>
    <property type="project" value="MGI"/>
</dbReference>
<dbReference type="GO" id="GO:0002879">
    <property type="term" value="P:positive regulation of acute inflammatory response to non-antigenic stimulus"/>
    <property type="evidence" value="ECO:0000315"/>
    <property type="project" value="UniProtKB"/>
</dbReference>
<dbReference type="GO" id="GO:0032722">
    <property type="term" value="P:positive regulation of chemokine production"/>
    <property type="evidence" value="ECO:0000315"/>
    <property type="project" value="UniProtKB"/>
</dbReference>
<dbReference type="GO" id="GO:0002720">
    <property type="term" value="P:positive regulation of cytokine production involved in immune response"/>
    <property type="evidence" value="ECO:0000315"/>
    <property type="project" value="UniProtKB"/>
</dbReference>
<dbReference type="GO" id="GO:1904457">
    <property type="term" value="P:positive regulation of neuronal action potential"/>
    <property type="evidence" value="ECO:0000315"/>
    <property type="project" value="MGI"/>
</dbReference>
<dbReference type="GO" id="GO:0003062">
    <property type="term" value="P:regulation of heart rate by chemical signal"/>
    <property type="evidence" value="ECO:0000315"/>
    <property type="project" value="MGI"/>
</dbReference>
<dbReference type="GO" id="GO:0046885">
    <property type="term" value="P:regulation of hormone biosynthetic process"/>
    <property type="evidence" value="ECO:0000315"/>
    <property type="project" value="UniProtKB"/>
</dbReference>
<dbReference type="GO" id="GO:0046626">
    <property type="term" value="P:regulation of insulin receptor signaling pathway"/>
    <property type="evidence" value="ECO:0000315"/>
    <property type="project" value="UniProtKB"/>
</dbReference>
<dbReference type="GO" id="GO:0014061">
    <property type="term" value="P:regulation of norepinephrine secretion"/>
    <property type="evidence" value="ECO:0000315"/>
    <property type="project" value="UniProtKB"/>
</dbReference>
<dbReference type="GO" id="GO:0090276">
    <property type="term" value="P:regulation of peptide hormone secretion"/>
    <property type="evidence" value="ECO:0000315"/>
    <property type="project" value="UniProtKB"/>
</dbReference>
<dbReference type="CDD" id="cd15170">
    <property type="entry name" value="7tmA_FFAR2_FFAR3"/>
    <property type="match status" value="1"/>
</dbReference>
<dbReference type="FunFam" id="1.20.1070.10:FF:000173">
    <property type="entry name" value="Free fatty acid receptor 1"/>
    <property type="match status" value="1"/>
</dbReference>
<dbReference type="Gene3D" id="1.20.1070.10">
    <property type="entry name" value="Rhodopsin 7-helix transmembrane proteins"/>
    <property type="match status" value="1"/>
</dbReference>
<dbReference type="InterPro" id="IPR000276">
    <property type="entry name" value="GPCR_Rhodpsn"/>
</dbReference>
<dbReference type="InterPro" id="IPR017452">
    <property type="entry name" value="GPCR_Rhodpsn_7TM"/>
</dbReference>
<dbReference type="InterPro" id="IPR013312">
    <property type="entry name" value="GPR40-rel_orph"/>
</dbReference>
<dbReference type="PANTHER" id="PTHR45822">
    <property type="entry name" value="FREE FATTY ACID RECEPTOR 2-RELATED"/>
    <property type="match status" value="1"/>
</dbReference>
<dbReference type="PANTHER" id="PTHR45822:SF6">
    <property type="entry name" value="FREE FATTY ACID RECEPTOR 3-RELATED"/>
    <property type="match status" value="1"/>
</dbReference>
<dbReference type="Pfam" id="PF00001">
    <property type="entry name" value="7tm_1"/>
    <property type="match status" value="1"/>
</dbReference>
<dbReference type="PRINTS" id="PR00237">
    <property type="entry name" value="GPCRRHODOPSN"/>
</dbReference>
<dbReference type="PRINTS" id="PR01904">
    <property type="entry name" value="GPR40FAMILY"/>
</dbReference>
<dbReference type="SUPFAM" id="SSF81321">
    <property type="entry name" value="Family A G protein-coupled receptor-like"/>
    <property type="match status" value="1"/>
</dbReference>
<dbReference type="PROSITE" id="PS00237">
    <property type="entry name" value="G_PROTEIN_RECEP_F1_1"/>
    <property type="match status" value="1"/>
</dbReference>
<dbReference type="PROSITE" id="PS50262">
    <property type="entry name" value="G_PROTEIN_RECEP_F1_2"/>
    <property type="match status" value="1"/>
</dbReference>